<comment type="function">
    <text evidence="1 2">Structural protein that makes short spikes at the surface of the virus. Contains receptor binding and receptor-destroying activities. Mediates de-O-acetylation of N-acetyl-4-O-acetylneuraminic acid, which is probably the receptor determinant recognized by the virus on the surface of erythrocytes and susceptible cells. This receptor-destroying activity is important for virus release as it probably helps preventing self-aggregation and ensures the efficient spread of the progeny virus from cell to cell. May serve as a secondary viral attachment protein for initiating infection, the spike protein being the major one. May become a target for both the humoral and the cellular branches of the immune system.</text>
</comment>
<comment type="catalytic activity">
    <reaction evidence="1 2">
        <text>N-acetyl-9-O-acetylneuraminate + H2O = N-acetylneuraminate + acetate + H(+)</text>
        <dbReference type="Rhea" id="RHEA:22600"/>
        <dbReference type="ChEBI" id="CHEBI:15377"/>
        <dbReference type="ChEBI" id="CHEBI:15378"/>
        <dbReference type="ChEBI" id="CHEBI:28999"/>
        <dbReference type="ChEBI" id="CHEBI:30089"/>
        <dbReference type="ChEBI" id="CHEBI:35418"/>
        <dbReference type="EC" id="3.1.1.53"/>
    </reaction>
</comment>
<comment type="catalytic activity">
    <reaction evidence="1 2">
        <text>N-acetyl-4-O-acetylneuraminate + H2O = N-acetylneuraminate + acetate + H(+)</text>
        <dbReference type="Rhea" id="RHEA:25564"/>
        <dbReference type="ChEBI" id="CHEBI:15377"/>
        <dbReference type="ChEBI" id="CHEBI:15378"/>
        <dbReference type="ChEBI" id="CHEBI:29006"/>
        <dbReference type="ChEBI" id="CHEBI:30089"/>
        <dbReference type="ChEBI" id="CHEBI:35418"/>
        <dbReference type="EC" id="3.1.1.53"/>
    </reaction>
</comment>
<comment type="subunit">
    <text evidence="1 2">Homodimer; disulfide-linked. Forms a complex with the M protein in the pre-Golgi. Associates then with S-M complex to form a ternary complex S-M-HE.</text>
</comment>
<comment type="subcellular location">
    <subcellularLocation>
        <location evidence="1">Virion membrane</location>
        <topology evidence="1">Single-pass type I membrane protein</topology>
    </subcellularLocation>
    <subcellularLocation>
        <location evidence="1">Host cell membrane</location>
        <topology evidence="1">Single-pass type I membrane protein</topology>
    </subcellularLocation>
    <text evidence="1">In infected cells becomes incorporated into the envelope of virions during virus assembly at the endoplasmic reticulum and cis Golgi. However, some may escape incorporation into virions and subsequently migrate to the cell surface.</text>
</comment>
<comment type="PTM">
    <text evidence="1 2">N-glycosylated in the host RER.</text>
</comment>
<comment type="similarity">
    <text evidence="1 3">Belongs to the influenza type C/coronaviruses hemagglutinin-esterase family.</text>
</comment>
<gene>
    <name evidence="1" type="primary">HE</name>
    <name type="ORF">2b</name>
</gene>
<reference key="1">
    <citation type="journal article" date="2005" name="J. Biol. Chem.">
        <title>Nidovirus sialate-O-acetylesterases: evolution and substrate specificity of coronaviral and toroviral receptor-destroying enzymes.</title>
        <authorList>
            <person name="Smits S.L."/>
            <person name="Gerwig G.J."/>
            <person name="van Vliet A.L."/>
            <person name="Lissenberg A."/>
            <person name="Briza P."/>
            <person name="Kamerling J.P."/>
            <person name="Vlasak R."/>
            <person name="de Groot R.J."/>
        </authorList>
    </citation>
    <scope>NUCLEOTIDE SEQUENCE [GENOMIC RNA]</scope>
    <scope>CHARACTERIZATION</scope>
    <source>
        <strain>S</strain>
    </source>
</reference>
<reference key="2">
    <citation type="journal article" date="2005" name="J. Virol.">
        <title>Luxury at a cost? Recombinant mouse hepatitis viruses expressing the accessory hemagglutinin esterase protein display reduced fitness in vitro.</title>
        <authorList>
            <person name="Lissenberg A."/>
            <person name="Vrolijk M.M."/>
            <person name="van Vliet A.L."/>
            <person name="Langereis M.A."/>
            <person name="de Groot-Mijnes J.D."/>
            <person name="Rottier P.J."/>
            <person name="de Groot R.J."/>
        </authorList>
    </citation>
    <scope>NUCLEOTIDE SEQUENCE [GENOMIC RNA]</scope>
    <source>
        <strain>S</strain>
    </source>
</reference>
<reference key="3">
    <citation type="submission" date="1997-11" db="EMBL/GenBank/DDBJ databases">
        <title>Murine hepatitis virus DVIM strain hemagglutinin-esterase glycoprotein gene, complete cds.</title>
        <authorList>
            <person name="Sugiyama K."/>
            <person name="Morita E."/>
            <person name="Ebina H."/>
            <person name="Muto A."/>
            <person name="Himeno H."/>
        </authorList>
    </citation>
    <scope>NUCLEOTIDE SEQUENCE [GENOMIC RNA]</scope>
    <source>
        <strain>DVIM</strain>
    </source>
</reference>
<reference key="4">
    <citation type="journal article" date="1991" name="Virology">
        <title>Heterogeneity of gene expression of the hemagglutinin-esterase (HE) protein of murine coronaviruses.</title>
        <authorList>
            <person name="Yokomori K."/>
            <person name="Banner L.R."/>
            <person name="Lai M.M.C."/>
        </authorList>
    </citation>
    <scope>NUCLEOTIDE SEQUENCE [GENOMIC RNA] OF 1-434</scope>
    <source>
        <strain>S</strain>
    </source>
</reference>
<reference key="5">
    <citation type="journal article" date="2002" name="J. Gen. Virol.">
        <title>The sialate-4-O-acetylesterases of coronaviruses related to mouse hepatitis virus: a proposal to reorganize group 2 Coronaviridae.</title>
        <authorList>
            <person name="Wurzer W.J."/>
            <person name="Obojes K."/>
            <person name="Vlasak R."/>
        </authorList>
    </citation>
    <scope>CHARACTERIZATION</scope>
</reference>
<reference key="6">
    <citation type="journal article" date="2012" name="PLoS Pathog.">
        <title>The murine coronavirus hemagglutinin-esterase receptor-binding site: a major shift in ligand specificity through modest changes in architecture.</title>
        <authorList>
            <person name="Langereis M.A."/>
            <person name="Zeng Q."/>
            <person name="Heesters B.A."/>
            <person name="Huizinga E.G."/>
            <person name="de Groot R.J."/>
        </authorList>
    </citation>
    <scope>X-RAY CRYSTALLOGRAPHY (2.10 ANGSTROMS) OF 25-403 OF PROTEIN MUTANT ALA-45 AND IN COMPLEX WITH RECEPTOR ANALOG</scope>
    <scope>FUNCTION</scope>
    <scope>CATALYTIC ACTIVITY</scope>
    <scope>SUBUNIT</scope>
    <scope>ACTIVE SITE</scope>
    <scope>GLYCOSYLATION AT ASN-94; ASN-152; ASN-196; ASN-246; ASN-316; ASN-331; ASN-360 AND ASN-374</scope>
    <scope>DISULFIDE BONDS</scope>
    <scope>MUTAGENESIS OF SER-45; LEU-119; ILE-166; PHE-212; LEU-260 AND TYR-281</scope>
    <source>
        <strain>S</strain>
    </source>
</reference>
<name>HEMA_CVMS</name>
<organism>
    <name type="scientific">Murine coronavirus (strain S)</name>
    <name type="common">MHV-S</name>
    <name type="synonym">Murine hepatitis virus</name>
    <dbReference type="NCBI Taxonomy" id="11145"/>
    <lineage>
        <taxon>Viruses</taxon>
        <taxon>Riboviria</taxon>
        <taxon>Orthornavirae</taxon>
        <taxon>Pisuviricota</taxon>
        <taxon>Pisoniviricetes</taxon>
        <taxon>Nidovirales</taxon>
        <taxon>Cornidovirineae</taxon>
        <taxon>Coronaviridae</taxon>
        <taxon>Orthocoronavirinae</taxon>
        <taxon>Betacoronavirus</taxon>
        <taxon>Embecovirus</taxon>
        <taxon>Murine coronavirus</taxon>
    </lineage>
</organism>
<organismHost>
    <name type="scientific">Mus musculus</name>
    <name type="common">Mouse</name>
    <dbReference type="NCBI Taxonomy" id="10090"/>
</organismHost>
<feature type="signal peptide" evidence="1">
    <location>
        <begin position="1"/>
        <end position="22"/>
    </location>
</feature>
<feature type="chain" id="PRO_0000037148" description="Hemagglutinin-esterase" evidence="1">
    <location>
        <begin position="23"/>
        <end position="439"/>
    </location>
</feature>
<feature type="topological domain" description="Virion surface" evidence="1">
    <location>
        <begin position="23"/>
        <end position="407"/>
    </location>
</feature>
<feature type="transmembrane region" description="Helical" evidence="1">
    <location>
        <begin position="408"/>
        <end position="428"/>
    </location>
</feature>
<feature type="topological domain" description="Intravirion" evidence="1">
    <location>
        <begin position="429"/>
        <end position="439"/>
    </location>
</feature>
<feature type="region of interest" description="Esterase domain 1" evidence="1">
    <location>
        <begin position="12"/>
        <end position="132"/>
    </location>
</feature>
<feature type="region of interest" description="Receptor binding" evidence="1">
    <location>
        <begin position="133"/>
        <end position="281"/>
    </location>
</feature>
<feature type="region of interest" description="Esterase domain 2" evidence="1">
    <location>
        <begin position="282"/>
        <end position="395"/>
    </location>
</feature>
<feature type="active site" description="Nucleophile" evidence="1 2">
    <location>
        <position position="45"/>
    </location>
</feature>
<feature type="active site" description="Charge relay system" evidence="1 2">
    <location>
        <position position="342"/>
    </location>
</feature>
<feature type="active site" description="Charge relay system" evidence="1 2">
    <location>
        <position position="345"/>
    </location>
</feature>
<feature type="glycosylation site" description="N-linked (GlcNAc...) asparagine; by host" evidence="1 2">
    <location>
        <position position="94"/>
    </location>
</feature>
<feature type="glycosylation site" description="N-linked (GlcNAc...) asparagine; by host" evidence="1 2">
    <location>
        <position position="152"/>
    </location>
</feature>
<feature type="glycosylation site" description="N-linked (GlcNAc...) asparagine; by host" evidence="1 2">
    <location>
        <position position="196"/>
    </location>
</feature>
<feature type="glycosylation site" description="N-linked (GlcNAc...) asparagine; by host" evidence="1 2">
    <location>
        <position position="246"/>
    </location>
</feature>
<feature type="glycosylation site" description="N-linked (GlcNAc...) asparagine; by host" evidence="1">
    <location>
        <position position="309"/>
    </location>
</feature>
<feature type="glycosylation site" description="N-linked (GlcNAc...) asparagine; by host" evidence="1 2">
    <location>
        <position position="316"/>
    </location>
</feature>
<feature type="glycosylation site" description="N-linked (GlcNAc...) asparagine; by host" evidence="1 2">
    <location>
        <position position="331"/>
    </location>
</feature>
<feature type="glycosylation site" description="N-linked (GlcNAc...) asparagine; by host" evidence="1 2">
    <location>
        <position position="360"/>
    </location>
</feature>
<feature type="glycosylation site" description="N-linked (GlcNAc...) asparagine; by host" evidence="1 2">
    <location>
        <position position="374"/>
    </location>
</feature>
<feature type="disulfide bond" evidence="1 2">
    <location>
        <begin position="49"/>
        <end position="70"/>
    </location>
</feature>
<feature type="disulfide bond" evidence="1 2">
    <location>
        <begin position="118"/>
        <end position="167"/>
    </location>
</feature>
<feature type="disulfide bond" evidence="1 2">
    <location>
        <begin position="202"/>
        <end position="291"/>
    </location>
</feature>
<feature type="disulfide bond" evidence="1 2">
    <location>
        <begin position="210"/>
        <end position="264"/>
    </location>
</feature>
<feature type="disulfide bond" evidence="1 2">
    <location>
        <begin position="322"/>
        <end position="327"/>
    </location>
</feature>
<feature type="disulfide bond" evidence="1 2">
    <location>
        <begin position="363"/>
        <end position="387"/>
    </location>
</feature>
<feature type="disulfide bond" description="Interchain" evidence="2">
    <location>
        <position position="400"/>
    </location>
</feature>
<feature type="mutagenesis site" description="Loss of enzyme activity." evidence="2">
    <original>S</original>
    <variation>A</variation>
    <location>
        <position position="45"/>
    </location>
</feature>
<feature type="mutagenesis site" description="Decreased receptor-binding activity." evidence="2">
    <original>L</original>
    <variation>A</variation>
    <location>
        <position position="119"/>
    </location>
</feature>
<feature type="mutagenesis site" description="Decreased receptor-binding activity." evidence="2">
    <original>I</original>
    <variation>A</variation>
    <location>
        <position position="166"/>
    </location>
</feature>
<feature type="mutagenesis site" description="Decreased receptor-binding activity." evidence="2">
    <original>F</original>
    <variation>A</variation>
    <location>
        <position position="212"/>
    </location>
</feature>
<feature type="mutagenesis site" description="Decreased receptor-binding activity." evidence="2">
    <original>L</original>
    <variation>A</variation>
    <location>
        <position position="260"/>
    </location>
</feature>
<feature type="mutagenesis site" description="Decreased receptor-binding activity." evidence="2">
    <original>Y</original>
    <variation>A</variation>
    <location>
        <position position="281"/>
    </location>
</feature>
<feature type="sequence conflict" description="In Ref. 4; AAA46460." evidence="3" ref="4">
    <original>S</original>
    <variation>Y</variation>
    <location>
        <position position="76"/>
    </location>
</feature>
<feature type="sequence conflict" description="In Ref. 4; AAA46460." evidence="3" ref="4">
    <original>P</original>
    <variation>T</variation>
    <location>
        <position position="208"/>
    </location>
</feature>
<feature type="sequence conflict" description="In Ref. 4; AAA46460." evidence="3" ref="4">
    <original>F</original>
    <variation>S</variation>
    <location>
        <position position="212"/>
    </location>
</feature>
<feature type="sequence conflict" description="In Ref. 4; AAA46460." evidence="3" ref="4">
    <original>G</original>
    <variation>S</variation>
    <location>
        <position position="218"/>
    </location>
</feature>
<feature type="sequence conflict" description="In Ref. 4; AAA46460." evidence="3" ref="4">
    <original>S</original>
    <variation>A</variation>
    <location>
        <position position="231"/>
    </location>
</feature>
<feature type="sequence conflict" description="In Ref. 4; AAA46460." evidence="3" ref="4">
    <original>D</original>
    <variation>E</variation>
    <location>
        <position position="403"/>
    </location>
</feature>
<feature type="strand" evidence="4">
    <location>
        <begin position="29"/>
        <end position="31"/>
    </location>
</feature>
<feature type="strand" evidence="4">
    <location>
        <begin position="35"/>
        <end position="37"/>
    </location>
</feature>
<feature type="strand" evidence="4">
    <location>
        <begin position="39"/>
        <end position="45"/>
    </location>
</feature>
<feature type="helix" evidence="4">
    <location>
        <begin position="61"/>
        <end position="63"/>
    </location>
</feature>
<feature type="turn" evidence="4">
    <location>
        <begin position="68"/>
        <end position="71"/>
    </location>
</feature>
<feature type="strand" evidence="4">
    <location>
        <begin position="75"/>
        <end position="77"/>
    </location>
</feature>
<feature type="helix" evidence="4">
    <location>
        <begin position="83"/>
        <end position="88"/>
    </location>
</feature>
<feature type="strand" evidence="4">
    <location>
        <begin position="89"/>
        <end position="91"/>
    </location>
</feature>
<feature type="strand" evidence="5">
    <location>
        <begin position="96"/>
        <end position="98"/>
    </location>
</feature>
<feature type="strand" evidence="4">
    <location>
        <begin position="100"/>
        <end position="106"/>
    </location>
</feature>
<feature type="turn" evidence="4">
    <location>
        <begin position="112"/>
        <end position="114"/>
    </location>
</feature>
<feature type="helix" evidence="4">
    <location>
        <begin position="124"/>
        <end position="141"/>
    </location>
</feature>
<feature type="turn" evidence="4">
    <location>
        <begin position="142"/>
        <end position="144"/>
    </location>
</feature>
<feature type="strand" evidence="4">
    <location>
        <begin position="145"/>
        <end position="152"/>
    </location>
</feature>
<feature type="strand" evidence="4">
    <location>
        <begin position="176"/>
        <end position="180"/>
    </location>
</feature>
<feature type="strand" evidence="4">
    <location>
        <begin position="187"/>
        <end position="189"/>
    </location>
</feature>
<feature type="strand" evidence="4">
    <location>
        <begin position="193"/>
        <end position="199"/>
    </location>
</feature>
<feature type="strand" evidence="4">
    <location>
        <begin position="201"/>
        <end position="214"/>
    </location>
</feature>
<feature type="strand" evidence="4">
    <location>
        <begin position="220"/>
        <end position="222"/>
    </location>
</feature>
<feature type="strand" evidence="4">
    <location>
        <begin position="231"/>
        <end position="236"/>
    </location>
</feature>
<feature type="turn" evidence="4">
    <location>
        <begin position="237"/>
        <end position="239"/>
    </location>
</feature>
<feature type="strand" evidence="4">
    <location>
        <begin position="241"/>
        <end position="246"/>
    </location>
</feature>
<feature type="strand" evidence="4">
    <location>
        <begin position="253"/>
        <end position="257"/>
    </location>
</feature>
<feature type="strand" evidence="4">
    <location>
        <begin position="261"/>
        <end position="269"/>
    </location>
</feature>
<feature type="strand" evidence="4">
    <location>
        <begin position="271"/>
        <end position="285"/>
    </location>
</feature>
<feature type="strand" evidence="4">
    <location>
        <begin position="287"/>
        <end position="295"/>
    </location>
</feature>
<feature type="strand" evidence="4">
    <location>
        <begin position="301"/>
        <end position="305"/>
    </location>
</feature>
<feature type="helix" evidence="4">
    <location>
        <begin position="317"/>
        <end position="321"/>
    </location>
</feature>
<feature type="turn" evidence="4">
    <location>
        <begin position="324"/>
        <end position="326"/>
    </location>
</feature>
<feature type="strand" evidence="4">
    <location>
        <begin position="327"/>
        <end position="330"/>
    </location>
</feature>
<feature type="helix" evidence="4">
    <location>
        <begin position="350"/>
        <end position="356"/>
    </location>
</feature>
<feature type="strand" evidence="4">
    <location>
        <begin position="362"/>
        <end position="365"/>
    </location>
</feature>
<feature type="strand" evidence="4">
    <location>
        <begin position="368"/>
        <end position="371"/>
    </location>
</feature>
<feature type="strand" evidence="4">
    <location>
        <begin position="373"/>
        <end position="375"/>
    </location>
</feature>
<feature type="strand" evidence="4">
    <location>
        <begin position="384"/>
        <end position="386"/>
    </location>
</feature>
<feature type="strand" evidence="4">
    <location>
        <begin position="399"/>
        <end position="401"/>
    </location>
</feature>
<sequence length="439" mass="49205">MGCMCIAMAPRTLLLLIGCQLVFGFNEPLNIVSHLNDDWFLFGDSRSDCTYVENNGHPKLDWLDLDPKLCNSGRISAKSGNSLFRSFHFIDFYNYSGEGDQVIFYEGVNFSPSHGFKCLAYGDNKRWMGNKARFYARVYEKMAQYRSLSFVNVSYAYGGNAKPTSICKDKTLTLNNPTFISKESNYVDYYYESEANFTLQGCDEFIVPLCVFNGHSKGSSSDPANKYYTDSQSYYNMDTGVLYGFNSTLDVGNTVQNPGLDLTCRYLALTPGNYKAVSLEYLLSLPSKAICLRKPKSFMPVQVVDSRWNSTRQSDNMTAVACQLPYCFFRNTSADYSGGTHDVHHGDFHFRQLLSGLLYNVSCIAQQGAFVYNNVSSSWPAYGYGHCPTAANIGYMAPVCIYDPLPVILLGVLLGIAVLIIVFLMFYFMTDSGVRLHEA</sequence>
<keyword id="KW-0002">3D-structure</keyword>
<keyword id="KW-1015">Disulfide bond</keyword>
<keyword id="KW-0325">Glycoprotein</keyword>
<keyword id="KW-0348">Hemagglutinin</keyword>
<keyword id="KW-1032">Host cell membrane</keyword>
<keyword id="KW-1043">Host membrane</keyword>
<keyword id="KW-0378">Hydrolase</keyword>
<keyword id="KW-0472">Membrane</keyword>
<keyword id="KW-0732">Signal</keyword>
<keyword id="KW-0812">Transmembrane</keyword>
<keyword id="KW-1133">Transmembrane helix</keyword>
<keyword id="KW-0261">Viral envelope protein</keyword>
<keyword id="KW-0946">Virion</keyword>
<protein>
    <recommendedName>
        <fullName evidence="1">Hemagglutinin-esterase</fullName>
        <shortName evidence="1">HE protein</shortName>
        <ecNumber evidence="1">3.1.1.53</ecNumber>
    </recommendedName>
    <alternativeName>
        <fullName evidence="1">E3 glycoprotein</fullName>
    </alternativeName>
</protein>
<accession>P31614</accession>
<accession>O55252</accession>
<proteinExistence type="evidence at protein level"/>
<dbReference type="EC" id="3.1.1.53" evidence="1"/>
<dbReference type="EMBL" id="AY771997">
    <property type="protein sequence ID" value="AAX08110.1"/>
    <property type="molecule type" value="Genomic_RNA"/>
</dbReference>
<dbReference type="EMBL" id="AB008939">
    <property type="protein sequence ID" value="BAA23718.1"/>
    <property type="molecule type" value="Genomic_RNA"/>
</dbReference>
<dbReference type="EMBL" id="M64316">
    <property type="protein sequence ID" value="AAA46460.1"/>
    <property type="molecule type" value="Genomic_RNA"/>
</dbReference>
<dbReference type="PIR" id="A40476">
    <property type="entry name" value="HMIHMS"/>
</dbReference>
<dbReference type="PDB" id="4C7L">
    <property type="method" value="X-ray"/>
    <property type="resolution" value="2.10 A"/>
    <property type="chains" value="A/B=25-403"/>
</dbReference>
<dbReference type="PDB" id="4C7W">
    <property type="method" value="X-ray"/>
    <property type="resolution" value="2.50 A"/>
    <property type="chains" value="A/B=25-403"/>
</dbReference>
<dbReference type="PDBsum" id="4C7L"/>
<dbReference type="PDBsum" id="4C7W"/>
<dbReference type="SMR" id="P31614"/>
<dbReference type="GlyCosmos" id="P31614">
    <property type="glycosylation" value="9 sites, No reported glycans"/>
</dbReference>
<dbReference type="iPTMnet" id="P31614"/>
<dbReference type="EvolutionaryTrace" id="P31614"/>
<dbReference type="GO" id="GO:0020002">
    <property type="term" value="C:host cell plasma membrane"/>
    <property type="evidence" value="ECO:0007669"/>
    <property type="project" value="UniProtKB-SubCell"/>
</dbReference>
<dbReference type="GO" id="GO:0016020">
    <property type="term" value="C:membrane"/>
    <property type="evidence" value="ECO:0007669"/>
    <property type="project" value="UniProtKB-UniRule"/>
</dbReference>
<dbReference type="GO" id="GO:0019031">
    <property type="term" value="C:viral envelope"/>
    <property type="evidence" value="ECO:0007669"/>
    <property type="project" value="UniProtKB-UniRule"/>
</dbReference>
<dbReference type="GO" id="GO:0055036">
    <property type="term" value="C:virion membrane"/>
    <property type="evidence" value="ECO:0007669"/>
    <property type="project" value="UniProtKB-SubCell"/>
</dbReference>
<dbReference type="GO" id="GO:0046789">
    <property type="term" value="F:host cell surface receptor binding"/>
    <property type="evidence" value="ECO:0007669"/>
    <property type="project" value="UniProtKB-UniRule"/>
</dbReference>
<dbReference type="GO" id="GO:0106331">
    <property type="term" value="F:sialate 4-O-acetylesterase activity"/>
    <property type="evidence" value="ECO:0007669"/>
    <property type="project" value="RHEA"/>
</dbReference>
<dbReference type="GO" id="GO:0106330">
    <property type="term" value="F:sialate 9-O-acetylesterase activity"/>
    <property type="evidence" value="ECO:0007669"/>
    <property type="project" value="RHEA"/>
</dbReference>
<dbReference type="GO" id="GO:0019064">
    <property type="term" value="P:fusion of virus membrane with host plasma membrane"/>
    <property type="evidence" value="ECO:0007669"/>
    <property type="project" value="UniProtKB-UniRule"/>
</dbReference>
<dbReference type="HAMAP" id="MF_04207">
    <property type="entry name" value="BETA_CORONA_HE"/>
    <property type="match status" value="1"/>
</dbReference>
<dbReference type="InterPro" id="IPR008980">
    <property type="entry name" value="Capsid_hemagglutn"/>
</dbReference>
<dbReference type="InterPro" id="IPR042545">
    <property type="entry name" value="HEMA"/>
</dbReference>
<dbReference type="InterPro" id="IPR007142">
    <property type="entry name" value="Hemagglutn-estrase_core"/>
</dbReference>
<dbReference type="InterPro" id="IPR003860">
    <property type="entry name" value="Hemagglutn-estrase_hemagglutn"/>
</dbReference>
<dbReference type="Pfam" id="PF03996">
    <property type="entry name" value="Hema_esterase"/>
    <property type="match status" value="1"/>
</dbReference>
<dbReference type="Pfam" id="PF02710">
    <property type="entry name" value="Hema_HEFG"/>
    <property type="match status" value="1"/>
</dbReference>
<dbReference type="SUPFAM" id="SSF52266">
    <property type="entry name" value="SGNH hydrolase"/>
    <property type="match status" value="1"/>
</dbReference>
<dbReference type="SUPFAM" id="SSF49818">
    <property type="entry name" value="Viral protein domain"/>
    <property type="match status" value="1"/>
</dbReference>
<evidence type="ECO:0000255" key="1">
    <source>
        <dbReference type="HAMAP-Rule" id="MF_04207"/>
    </source>
</evidence>
<evidence type="ECO:0000269" key="2">
    <source>
    </source>
</evidence>
<evidence type="ECO:0000305" key="3"/>
<evidence type="ECO:0007829" key="4">
    <source>
        <dbReference type="PDB" id="4C7L"/>
    </source>
</evidence>
<evidence type="ECO:0007829" key="5">
    <source>
        <dbReference type="PDB" id="4C7W"/>
    </source>
</evidence>